<keyword id="KW-0378">Hydrolase</keyword>
<keyword id="KW-0460">Magnesium</keyword>
<keyword id="KW-0479">Metal-binding</keyword>
<keyword id="KW-0546">Nucleotide metabolism</keyword>
<keyword id="KW-1185">Reference proteome</keyword>
<organism>
    <name type="scientific">Lactococcus lactis subsp. lactis (strain IL1403)</name>
    <name type="common">Streptococcus lactis</name>
    <dbReference type="NCBI Taxonomy" id="272623"/>
    <lineage>
        <taxon>Bacteria</taxon>
        <taxon>Bacillati</taxon>
        <taxon>Bacillota</taxon>
        <taxon>Bacilli</taxon>
        <taxon>Lactobacillales</taxon>
        <taxon>Streptococcaceae</taxon>
        <taxon>Lactococcus</taxon>
    </lineage>
</organism>
<name>DUT_LACLA</name>
<gene>
    <name type="primary">dut</name>
    <name type="ordered locus">LL0176</name>
    <name type="ORF">L181168</name>
</gene>
<accession>Q9CJ30</accession>
<comment type="function">
    <text evidence="1">This enzyme is involved in nucleotide metabolism: it produces dUMP, the immediate precursor of thymidine nucleotides and it decreases the intracellular concentration of dUTP so that uracil cannot be incorporated into DNA.</text>
</comment>
<comment type="catalytic activity">
    <reaction>
        <text>dUTP + H2O = dUMP + diphosphate + H(+)</text>
        <dbReference type="Rhea" id="RHEA:10248"/>
        <dbReference type="ChEBI" id="CHEBI:15377"/>
        <dbReference type="ChEBI" id="CHEBI:15378"/>
        <dbReference type="ChEBI" id="CHEBI:33019"/>
        <dbReference type="ChEBI" id="CHEBI:61555"/>
        <dbReference type="ChEBI" id="CHEBI:246422"/>
        <dbReference type="EC" id="3.6.1.23"/>
    </reaction>
</comment>
<comment type="cofactor">
    <cofactor evidence="1">
        <name>Mg(2+)</name>
        <dbReference type="ChEBI" id="CHEBI:18420"/>
    </cofactor>
</comment>
<comment type="pathway">
    <text>Pyrimidine metabolism; dUMP biosynthesis; dUMP from dCTP (dUTP route): step 2/2.</text>
</comment>
<comment type="similarity">
    <text evidence="2">Belongs to the dUTPase family.</text>
</comment>
<dbReference type="EC" id="3.6.1.23"/>
<dbReference type="EMBL" id="AE005176">
    <property type="protein sequence ID" value="AAK04274.1"/>
    <property type="molecule type" value="Genomic_DNA"/>
</dbReference>
<dbReference type="PIR" id="H86646">
    <property type="entry name" value="H86646"/>
</dbReference>
<dbReference type="RefSeq" id="NP_266332.1">
    <property type="nucleotide sequence ID" value="NC_002662.1"/>
</dbReference>
<dbReference type="RefSeq" id="WP_010905176.1">
    <property type="nucleotide sequence ID" value="NC_002662.1"/>
</dbReference>
<dbReference type="SMR" id="Q9CJ30"/>
<dbReference type="PaxDb" id="272623-L181168"/>
<dbReference type="EnsemblBacteria" id="AAK04274">
    <property type="protein sequence ID" value="AAK04274"/>
    <property type="gene ID" value="L181168"/>
</dbReference>
<dbReference type="KEGG" id="lla:L181168"/>
<dbReference type="PATRIC" id="fig|272623.7.peg.198"/>
<dbReference type="eggNOG" id="COG0756">
    <property type="taxonomic scope" value="Bacteria"/>
</dbReference>
<dbReference type="HOGENOM" id="CLU_068508_0_0_9"/>
<dbReference type="OrthoDB" id="9809956at2"/>
<dbReference type="UniPathway" id="UPA00610">
    <property type="reaction ID" value="UER00666"/>
</dbReference>
<dbReference type="Proteomes" id="UP000002196">
    <property type="component" value="Chromosome"/>
</dbReference>
<dbReference type="GO" id="GO:0004170">
    <property type="term" value="F:dUTP diphosphatase activity"/>
    <property type="evidence" value="ECO:0007669"/>
    <property type="project" value="UniProtKB-EC"/>
</dbReference>
<dbReference type="GO" id="GO:0000287">
    <property type="term" value="F:magnesium ion binding"/>
    <property type="evidence" value="ECO:0007669"/>
    <property type="project" value="InterPro"/>
</dbReference>
<dbReference type="GO" id="GO:0006226">
    <property type="term" value="P:dUMP biosynthetic process"/>
    <property type="evidence" value="ECO:0007669"/>
    <property type="project" value="UniProtKB-UniPathway"/>
</dbReference>
<dbReference type="GO" id="GO:0046081">
    <property type="term" value="P:dUTP catabolic process"/>
    <property type="evidence" value="ECO:0007669"/>
    <property type="project" value="InterPro"/>
</dbReference>
<dbReference type="CDD" id="cd07557">
    <property type="entry name" value="trimeric_dUTPase"/>
    <property type="match status" value="1"/>
</dbReference>
<dbReference type="Gene3D" id="2.70.40.10">
    <property type="match status" value="1"/>
</dbReference>
<dbReference type="InterPro" id="IPR008181">
    <property type="entry name" value="dUTPase"/>
</dbReference>
<dbReference type="InterPro" id="IPR029054">
    <property type="entry name" value="dUTPase-like"/>
</dbReference>
<dbReference type="InterPro" id="IPR036157">
    <property type="entry name" value="dUTPase-like_sf"/>
</dbReference>
<dbReference type="InterPro" id="IPR033704">
    <property type="entry name" value="dUTPase_trimeric"/>
</dbReference>
<dbReference type="NCBIfam" id="TIGR00576">
    <property type="entry name" value="dut"/>
    <property type="match status" value="1"/>
</dbReference>
<dbReference type="NCBIfam" id="NF010561">
    <property type="entry name" value="PRK13956.1"/>
    <property type="match status" value="1"/>
</dbReference>
<dbReference type="PANTHER" id="PTHR11241">
    <property type="entry name" value="DEOXYURIDINE 5'-TRIPHOSPHATE NUCLEOTIDOHYDROLASE"/>
    <property type="match status" value="1"/>
</dbReference>
<dbReference type="PANTHER" id="PTHR11241:SF0">
    <property type="entry name" value="DEOXYURIDINE 5'-TRIPHOSPHATE NUCLEOTIDOHYDROLASE"/>
    <property type="match status" value="1"/>
</dbReference>
<dbReference type="Pfam" id="PF00692">
    <property type="entry name" value="dUTPase"/>
    <property type="match status" value="1"/>
</dbReference>
<dbReference type="SUPFAM" id="SSF51283">
    <property type="entry name" value="dUTPase-like"/>
    <property type="match status" value="1"/>
</dbReference>
<feature type="chain" id="PRO_0000182872" description="Deoxyuridine 5'-triphosphate nucleotidohydrolase">
    <location>
        <begin position="1"/>
        <end position="150"/>
    </location>
</feature>
<feature type="binding site" evidence="1">
    <location>
        <begin position="67"/>
        <end position="69"/>
    </location>
    <ligand>
        <name>substrate</name>
    </ligand>
</feature>
<feature type="binding site" evidence="1">
    <location>
        <position position="80"/>
    </location>
    <ligand>
        <name>substrate</name>
    </ligand>
</feature>
<feature type="binding site" evidence="1">
    <location>
        <begin position="84"/>
        <end position="86"/>
    </location>
    <ligand>
        <name>substrate</name>
    </ligand>
</feature>
<proteinExistence type="inferred from homology"/>
<evidence type="ECO:0000250" key="1"/>
<evidence type="ECO:0000305" key="2"/>
<protein>
    <recommendedName>
        <fullName>Deoxyuridine 5'-triphosphate nucleotidohydrolase</fullName>
        <shortName>dUTPase</shortName>
        <ecNumber>3.6.1.23</ecNumber>
    </recommendedName>
    <alternativeName>
        <fullName>dUTP pyrophosphatase</fullName>
    </alternativeName>
</protein>
<reference key="1">
    <citation type="journal article" date="2001" name="Genome Res.">
        <title>The complete genome sequence of the lactic acid bacterium Lactococcus lactis ssp. lactis IL1403.</title>
        <authorList>
            <person name="Bolotin A."/>
            <person name="Wincker P."/>
            <person name="Mauger S."/>
            <person name="Jaillon O."/>
            <person name="Malarme K."/>
            <person name="Weissenbach J."/>
            <person name="Ehrlich S.D."/>
            <person name="Sorokin A."/>
        </authorList>
    </citation>
    <scope>NUCLEOTIDE SEQUENCE [LARGE SCALE GENOMIC DNA]</scope>
    <source>
        <strain>IL1403</strain>
    </source>
</reference>
<sequence length="150" mass="16722">MKIRGFEVVTKYKNAGINIPKRSTEHSAGYDIEAAETVSFAPGEIKLIPTGLKAYMQAGEVLYMYDRSSNPRKKGLVLINSVGVIDKDYYNNPDNEGHMFMQMRNFTDEEVVIEKGERVVQGVFMPFLVADGDENQEKEERTGGFGSTGA</sequence>